<keyword id="KW-0238">DNA-binding</keyword>
<keyword id="KW-0535">Nitrogen fixation</keyword>
<keyword id="KW-0536">Nodulation</keyword>
<feature type="chain" id="PRO_0000098148" description="Nodulation protein NolA">
    <location>
        <begin position="1"/>
        <end position="237"/>
    </location>
</feature>
<feature type="domain" description="HTH merR-type" evidence="1">
    <location>
        <begin position="10"/>
        <end position="79"/>
    </location>
</feature>
<feature type="DNA-binding region" description="H-T-H motif" evidence="1">
    <location>
        <begin position="13"/>
        <end position="32"/>
    </location>
</feature>
<comment type="function">
    <text>Involved in genotype-specific nodulation of soybeans.</text>
</comment>
<accession>P50330</accession>
<sequence length="237" mass="27030">MTKATPRRRRWRIGELAGATGVTVRTLHHYEHTGLLAASERTDGGHRMYDRESIQRVHQIRALRELGFSLQEIRRAMDGRTSLTDLLRKHLQRIEVQVARATQLRDRLRNMTTDGDVRVSVDQLPAALDAMSKVEKRPQPRPCTCALAADREERWRRIRNDLRHCMDRNEHPCSDRTKAVALEARTLISEIAGNDLTGSTILKVLARLSDPRSLAGWDPHLMQYLDSALVALGDQPH</sequence>
<name>NOLA_BRASN</name>
<gene>
    <name type="primary">nolA</name>
</gene>
<reference key="1">
    <citation type="journal article" date="1996" name="J. Bacteriol.">
        <title>Bradyrhizobium (Arachis) sp. strain NC92 contains two nodD genes involved in the repression of nodA and a nolA gene required for the efficient nodulation of host plants.</title>
        <authorList>
            <person name="Gillette W.K."/>
            <person name="Elkan G.H."/>
        </authorList>
    </citation>
    <scope>NUCLEOTIDE SEQUENCE [GENOMIC DNA]</scope>
</reference>
<protein>
    <recommendedName>
        <fullName>Nodulation protein NolA</fullName>
    </recommendedName>
</protein>
<proteinExistence type="predicted"/>
<evidence type="ECO:0000255" key="1">
    <source>
        <dbReference type="PROSITE-ProRule" id="PRU00254"/>
    </source>
</evidence>
<dbReference type="EMBL" id="U33192">
    <property type="protein sequence ID" value="AAB06564.1"/>
    <property type="molecule type" value="Genomic_DNA"/>
</dbReference>
<dbReference type="RefSeq" id="WP_260380608.1">
    <property type="nucleotide sequence ID" value="NZ_CP104171.1"/>
</dbReference>
<dbReference type="SMR" id="P50330"/>
<dbReference type="GO" id="GO:0003677">
    <property type="term" value="F:DNA binding"/>
    <property type="evidence" value="ECO:0007669"/>
    <property type="project" value="UniProtKB-KW"/>
</dbReference>
<dbReference type="GO" id="GO:0003700">
    <property type="term" value="F:DNA-binding transcription factor activity"/>
    <property type="evidence" value="ECO:0007669"/>
    <property type="project" value="InterPro"/>
</dbReference>
<dbReference type="GO" id="GO:0009399">
    <property type="term" value="P:nitrogen fixation"/>
    <property type="evidence" value="ECO:0007669"/>
    <property type="project" value="UniProtKB-KW"/>
</dbReference>
<dbReference type="CDD" id="cd04788">
    <property type="entry name" value="HTH_NolA-AlbR"/>
    <property type="match status" value="1"/>
</dbReference>
<dbReference type="Gene3D" id="1.10.1660.10">
    <property type="match status" value="1"/>
</dbReference>
<dbReference type="InterPro" id="IPR009061">
    <property type="entry name" value="DNA-bd_dom_put_sf"/>
</dbReference>
<dbReference type="InterPro" id="IPR000551">
    <property type="entry name" value="MerR-type_HTH_dom"/>
</dbReference>
<dbReference type="InterPro" id="IPR047057">
    <property type="entry name" value="MerR_fam"/>
</dbReference>
<dbReference type="PANTHER" id="PTHR30204:SF90">
    <property type="entry name" value="HTH-TYPE TRANSCRIPTIONAL ACTIVATOR MTA"/>
    <property type="match status" value="1"/>
</dbReference>
<dbReference type="PANTHER" id="PTHR30204">
    <property type="entry name" value="REDOX-CYCLING DRUG-SENSING TRANSCRIPTIONAL ACTIVATOR SOXR"/>
    <property type="match status" value="1"/>
</dbReference>
<dbReference type="Pfam" id="PF13411">
    <property type="entry name" value="MerR_1"/>
    <property type="match status" value="1"/>
</dbReference>
<dbReference type="PRINTS" id="PR00040">
    <property type="entry name" value="HTHMERR"/>
</dbReference>
<dbReference type="SMART" id="SM00422">
    <property type="entry name" value="HTH_MERR"/>
    <property type="match status" value="1"/>
</dbReference>
<dbReference type="SUPFAM" id="SSF46955">
    <property type="entry name" value="Putative DNA-binding domain"/>
    <property type="match status" value="1"/>
</dbReference>
<dbReference type="PROSITE" id="PS00552">
    <property type="entry name" value="HTH_MERR_1"/>
    <property type="match status" value="1"/>
</dbReference>
<dbReference type="PROSITE" id="PS50937">
    <property type="entry name" value="HTH_MERR_2"/>
    <property type="match status" value="1"/>
</dbReference>
<organism>
    <name type="scientific">Bradyrhizobium sp. (strain NC92)</name>
    <dbReference type="NCBI Taxonomy" id="55395"/>
    <lineage>
        <taxon>Bacteria</taxon>
        <taxon>Pseudomonadati</taxon>
        <taxon>Pseudomonadota</taxon>
        <taxon>Alphaproteobacteria</taxon>
        <taxon>Hyphomicrobiales</taxon>
        <taxon>Nitrobacteraceae</taxon>
        <taxon>Bradyrhizobium</taxon>
    </lineage>
</organism>